<comment type="function">
    <text evidence="1">This is one of the proteins that bind and probably mediate the attachment of the 5S RNA into the large ribosomal subunit, where it forms part of the central protuberance. In the 70S ribosome it contacts protein S13 of the 30S subunit (bridge B1b), connecting the 2 subunits; this bridge is implicated in subunit movement. Contacts the P site tRNA; the 5S rRNA and some of its associated proteins might help stabilize positioning of ribosome-bound tRNAs.</text>
</comment>
<comment type="subunit">
    <text evidence="1">Part of the 50S ribosomal subunit; part of the 5S rRNA/L5/L18/L25 subcomplex. Contacts the 5S rRNA and the P site tRNA. Forms a bridge to the 30S subunit in the 70S ribosome.</text>
</comment>
<comment type="similarity">
    <text evidence="1">Belongs to the universal ribosomal protein uL5 family.</text>
</comment>
<sequence>MTLKNRYKESIRPKLLKELGLKNIHQVPKVVKVNVNRGLGEAASNSKALEASLNEMATITGQKALVTRAKKAIAGFKIREGMPIGCTVTLRGDRMYSFLERFINLALPRIRDFRGVNPKSFDGRGNYTVGVKEQLIFPEISFDKIDSIRGMDITIVTSARSDQEGKALLQELGMPFSKN</sequence>
<evidence type="ECO:0000255" key="1">
    <source>
        <dbReference type="HAMAP-Rule" id="MF_01333"/>
    </source>
</evidence>
<evidence type="ECO:0000305" key="2"/>
<organism>
    <name type="scientific">Prochlorococcus marinus (strain MIT 9215)</name>
    <dbReference type="NCBI Taxonomy" id="93060"/>
    <lineage>
        <taxon>Bacteria</taxon>
        <taxon>Bacillati</taxon>
        <taxon>Cyanobacteriota</taxon>
        <taxon>Cyanophyceae</taxon>
        <taxon>Synechococcales</taxon>
        <taxon>Prochlorococcaceae</taxon>
        <taxon>Prochlorococcus</taxon>
    </lineage>
</organism>
<keyword id="KW-0687">Ribonucleoprotein</keyword>
<keyword id="KW-0689">Ribosomal protein</keyword>
<keyword id="KW-0694">RNA-binding</keyword>
<keyword id="KW-0699">rRNA-binding</keyword>
<keyword id="KW-0820">tRNA-binding</keyword>
<feature type="chain" id="PRO_1000067622" description="Large ribosomal subunit protein uL5">
    <location>
        <begin position="1"/>
        <end position="179"/>
    </location>
</feature>
<name>RL5_PROM2</name>
<proteinExistence type="inferred from homology"/>
<dbReference type="EMBL" id="CP000825">
    <property type="protein sequence ID" value="ABV51430.1"/>
    <property type="molecule type" value="Genomic_DNA"/>
</dbReference>
<dbReference type="RefSeq" id="WP_002805606.1">
    <property type="nucleotide sequence ID" value="NC_009840.1"/>
</dbReference>
<dbReference type="SMR" id="A8G749"/>
<dbReference type="STRING" id="93060.P9215_18171"/>
<dbReference type="KEGG" id="pmh:P9215_18171"/>
<dbReference type="eggNOG" id="COG0094">
    <property type="taxonomic scope" value="Bacteria"/>
</dbReference>
<dbReference type="HOGENOM" id="CLU_061015_2_1_3"/>
<dbReference type="OrthoDB" id="9806626at2"/>
<dbReference type="Proteomes" id="UP000002014">
    <property type="component" value="Chromosome"/>
</dbReference>
<dbReference type="GO" id="GO:1990904">
    <property type="term" value="C:ribonucleoprotein complex"/>
    <property type="evidence" value="ECO:0007669"/>
    <property type="project" value="UniProtKB-KW"/>
</dbReference>
<dbReference type="GO" id="GO:0005840">
    <property type="term" value="C:ribosome"/>
    <property type="evidence" value="ECO:0007669"/>
    <property type="project" value="UniProtKB-KW"/>
</dbReference>
<dbReference type="GO" id="GO:0019843">
    <property type="term" value="F:rRNA binding"/>
    <property type="evidence" value="ECO:0007669"/>
    <property type="project" value="UniProtKB-UniRule"/>
</dbReference>
<dbReference type="GO" id="GO:0003735">
    <property type="term" value="F:structural constituent of ribosome"/>
    <property type="evidence" value="ECO:0007669"/>
    <property type="project" value="InterPro"/>
</dbReference>
<dbReference type="GO" id="GO:0000049">
    <property type="term" value="F:tRNA binding"/>
    <property type="evidence" value="ECO:0007669"/>
    <property type="project" value="UniProtKB-UniRule"/>
</dbReference>
<dbReference type="GO" id="GO:0006412">
    <property type="term" value="P:translation"/>
    <property type="evidence" value="ECO:0007669"/>
    <property type="project" value="UniProtKB-UniRule"/>
</dbReference>
<dbReference type="FunFam" id="3.30.1440.10:FF:000001">
    <property type="entry name" value="50S ribosomal protein L5"/>
    <property type="match status" value="1"/>
</dbReference>
<dbReference type="Gene3D" id="3.30.1440.10">
    <property type="match status" value="1"/>
</dbReference>
<dbReference type="HAMAP" id="MF_01333_B">
    <property type="entry name" value="Ribosomal_uL5_B"/>
    <property type="match status" value="1"/>
</dbReference>
<dbReference type="InterPro" id="IPR002132">
    <property type="entry name" value="Ribosomal_uL5"/>
</dbReference>
<dbReference type="InterPro" id="IPR020930">
    <property type="entry name" value="Ribosomal_uL5_bac-type"/>
</dbReference>
<dbReference type="InterPro" id="IPR031309">
    <property type="entry name" value="Ribosomal_uL5_C"/>
</dbReference>
<dbReference type="InterPro" id="IPR020929">
    <property type="entry name" value="Ribosomal_uL5_CS"/>
</dbReference>
<dbReference type="InterPro" id="IPR022803">
    <property type="entry name" value="Ribosomal_uL5_dom_sf"/>
</dbReference>
<dbReference type="InterPro" id="IPR031310">
    <property type="entry name" value="Ribosomal_uL5_N"/>
</dbReference>
<dbReference type="NCBIfam" id="NF000585">
    <property type="entry name" value="PRK00010.1"/>
    <property type="match status" value="1"/>
</dbReference>
<dbReference type="PANTHER" id="PTHR11994">
    <property type="entry name" value="60S RIBOSOMAL PROTEIN L11-RELATED"/>
    <property type="match status" value="1"/>
</dbReference>
<dbReference type="Pfam" id="PF00281">
    <property type="entry name" value="Ribosomal_L5"/>
    <property type="match status" value="1"/>
</dbReference>
<dbReference type="Pfam" id="PF00673">
    <property type="entry name" value="Ribosomal_L5_C"/>
    <property type="match status" value="1"/>
</dbReference>
<dbReference type="PIRSF" id="PIRSF002161">
    <property type="entry name" value="Ribosomal_L5"/>
    <property type="match status" value="1"/>
</dbReference>
<dbReference type="SUPFAM" id="SSF55282">
    <property type="entry name" value="RL5-like"/>
    <property type="match status" value="1"/>
</dbReference>
<dbReference type="PROSITE" id="PS00358">
    <property type="entry name" value="RIBOSOMAL_L5"/>
    <property type="match status" value="1"/>
</dbReference>
<gene>
    <name evidence="1" type="primary">rplE</name>
    <name evidence="1" type="synonym">rpl5</name>
    <name type="ordered locus">P9215_18171</name>
</gene>
<accession>A8G749</accession>
<protein>
    <recommendedName>
        <fullName evidence="1">Large ribosomal subunit protein uL5</fullName>
    </recommendedName>
    <alternativeName>
        <fullName evidence="2">50S ribosomal protein L5</fullName>
    </alternativeName>
</protein>
<reference key="1">
    <citation type="journal article" date="2007" name="PLoS Genet.">
        <title>Patterns and implications of gene gain and loss in the evolution of Prochlorococcus.</title>
        <authorList>
            <person name="Kettler G.C."/>
            <person name="Martiny A.C."/>
            <person name="Huang K."/>
            <person name="Zucker J."/>
            <person name="Coleman M.L."/>
            <person name="Rodrigue S."/>
            <person name="Chen F."/>
            <person name="Lapidus A."/>
            <person name="Ferriera S."/>
            <person name="Johnson J."/>
            <person name="Steglich C."/>
            <person name="Church G.M."/>
            <person name="Richardson P."/>
            <person name="Chisholm S.W."/>
        </authorList>
    </citation>
    <scope>NUCLEOTIDE SEQUENCE [LARGE SCALE GENOMIC DNA]</scope>
    <source>
        <strain>MIT 9215</strain>
    </source>
</reference>